<keyword id="KW-0106">Calcium</keyword>
<keyword id="KW-0903">Direct protein sequencing</keyword>
<keyword id="KW-0378">Hydrolase</keyword>
<keyword id="KW-0479">Metal-binding</keyword>
<keyword id="KW-0482">Metalloprotease</keyword>
<keyword id="KW-0645">Protease</keyword>
<keyword id="KW-0964">Secreted</keyword>
<keyword id="KW-0732">Signal</keyword>
<keyword id="KW-0843">Virulence</keyword>
<keyword id="KW-0862">Zinc</keyword>
<keyword id="KW-0865">Zymogen</keyword>
<reference key="1">
    <citation type="journal article" date="1992" name="J. Bacteriol.">
        <title>Cloning of a metalloprotease gene involved in the virulence mechanism of Vibrio anguillarum.</title>
        <authorList>
            <person name="Milton D.L."/>
            <person name="Norqvist A."/>
            <person name="Wolf-Watz H."/>
        </authorList>
    </citation>
    <scope>NUCLEOTIDE SEQUENCE [GENOMIC DNA]</scope>
    <source>
        <strain>NB10 / Serotype O1</strain>
    </source>
</reference>
<reference key="2">
    <citation type="journal article" date="1990" name="Infect. Immun.">
        <title>Identification and characterization of a zinc metalloprotease associated with invasion by the fish pathogen Vibrio anguillarum.</title>
        <authorList>
            <person name="Norqvist A."/>
            <person name="Norrman B."/>
            <person name="Wolf-Watz H."/>
        </authorList>
    </citation>
    <scope>PROTEIN SEQUENCE OF 200-219</scope>
</reference>
<protein>
    <recommendedName>
        <fullName>Virulence metalloprotease</fullName>
        <ecNumber>3.4.24.-</ecNumber>
    </recommendedName>
    <alternativeName>
        <fullName>Vibriolysin</fullName>
    </alternativeName>
</protein>
<name>EMPA_VIBAN</name>
<feature type="signal peptide" evidence="2">
    <location>
        <begin position="1"/>
        <end position="25"/>
    </location>
</feature>
<feature type="propeptide" id="PRO_0000028626" evidence="4">
    <location>
        <begin position="26"/>
        <end position="199"/>
    </location>
</feature>
<feature type="chain" id="PRO_0000028627" description="Virulence metalloprotease">
    <location>
        <begin position="200"/>
        <end position="611"/>
    </location>
</feature>
<feature type="active site" evidence="3">
    <location>
        <position position="347"/>
    </location>
</feature>
<feature type="active site" description="Proton donor" evidence="3">
    <location>
        <position position="429"/>
    </location>
</feature>
<feature type="binding site" evidence="3">
    <location>
        <position position="346"/>
    </location>
    <ligand>
        <name>Zn(2+)</name>
        <dbReference type="ChEBI" id="CHEBI:29105"/>
        <note>catalytic</note>
    </ligand>
</feature>
<feature type="binding site" evidence="3">
    <location>
        <position position="350"/>
    </location>
    <ligand>
        <name>Zn(2+)</name>
        <dbReference type="ChEBI" id="CHEBI:29105"/>
        <note>catalytic</note>
    </ligand>
</feature>
<feature type="binding site" evidence="3">
    <location>
        <position position="370"/>
    </location>
    <ligand>
        <name>Zn(2+)</name>
        <dbReference type="ChEBI" id="CHEBI:29105"/>
        <note>catalytic</note>
    </ligand>
</feature>
<organism>
    <name type="scientific">Vibrio anguillarum</name>
    <name type="common">Listonella anguillarum</name>
    <dbReference type="NCBI Taxonomy" id="55601"/>
    <lineage>
        <taxon>Bacteria</taxon>
        <taxon>Pseudomonadati</taxon>
        <taxon>Pseudomonadota</taxon>
        <taxon>Gammaproteobacteria</taxon>
        <taxon>Vibrionales</taxon>
        <taxon>Vibrionaceae</taxon>
        <taxon>Vibrio</taxon>
    </lineage>
</organism>
<comment type="function">
    <text>Extracellular zinc metalloprotease involved in the virulence mechanism of V.anguillarum.</text>
</comment>
<comment type="cofactor">
    <cofactor evidence="1">
        <name>Ca(2+)</name>
        <dbReference type="ChEBI" id="CHEBI:29108"/>
    </cofactor>
    <text evidence="1">Binds 1 Ca(2+) ion per subunit.</text>
</comment>
<comment type="cofactor">
    <cofactor evidence="1">
        <name>Zn(2+)</name>
        <dbReference type="ChEBI" id="CHEBI:29105"/>
    </cofactor>
    <text evidence="1">Binds 1 zinc ion per subunit.</text>
</comment>
<comment type="subcellular location">
    <subcellularLocation>
        <location>Secreted</location>
    </subcellularLocation>
</comment>
<comment type="PTM">
    <text>Seems to be more extensively processed.</text>
</comment>
<comment type="similarity">
    <text evidence="5">Belongs to the peptidase M4 family.</text>
</comment>
<evidence type="ECO:0000250" key="1"/>
<evidence type="ECO:0000255" key="2"/>
<evidence type="ECO:0000255" key="3">
    <source>
        <dbReference type="PROSITE-ProRule" id="PRU10095"/>
    </source>
</evidence>
<evidence type="ECO:0000269" key="4">
    <source>
    </source>
</evidence>
<evidence type="ECO:0000305" key="5"/>
<sequence length="611" mass="66726">MKKVQRQMKWLFLAASISAALPVSAAKMVQVDDPSLLEQALSMQARSIVPTQNGFQVVKSVTLPNGKVKVRYQQMYHGLPVFNTSVVATQTEKGIGQVYGMLAQQIDSDVVSTSPQVEQKQAVSIALTHYQQQNPSLTSADLVTENERAQLMVRLDENQMAQMVYLVDFFVATNEPARPFFFIDANSGDVLQTWEGLNHAEATGTGPGGNQKTGFYQYGTDFPGLVINKVGNTCSMMNSAVKTVDMKHATSGGSTFSYSCTDASNYNDYKAINGAYSPLNDAHYFGKVVFDMYKDWMNTTPLTFQLTMRVHYDSNYENAFWNGSSMTFGDGQNTFYPLVDINVSAHEVSHGFTEQNSGLVYQNMSGGINEAFSDIAGEAAEFYMKGSVDWVVGSDIFKSSGGLRYFDQPSKDGRSIDHASQYYNGLNVHYSSGVFNRAYYLLANKANWSVRKGFEVFTVANQLYWTANSTFDQGGCGVAKAAQDLGYNKADVVDAFNQVGVNASCGVVPPTENVLEKGKPVIGLQGTRSSEAFYTFTVASSTSAKVSISLGSGDADLYVKAGSKPTTSSWDCRPYKSGNNEQCTISATPGTTYHVMLKGYSNYSGVTLRLD</sequence>
<proteinExistence type="evidence at protein level"/>
<gene>
    <name type="primary">empA</name>
</gene>
<accession>P43147</accession>
<dbReference type="EC" id="3.4.24.-"/>
<dbReference type="EMBL" id="L02528">
    <property type="protein sequence ID" value="AAA27517.1"/>
    <property type="molecule type" value="Genomic_DNA"/>
</dbReference>
<dbReference type="PIR" id="A47015">
    <property type="entry name" value="A47015"/>
</dbReference>
<dbReference type="RefSeq" id="WP_013868121.1">
    <property type="nucleotide sequence ID" value="NZ_VSLF01000016.1"/>
</dbReference>
<dbReference type="SMR" id="P43147"/>
<dbReference type="STRING" id="55601.AA407_15075"/>
<dbReference type="MEROPS" id="M04.003"/>
<dbReference type="OMA" id="WDYYRTT"/>
<dbReference type="GO" id="GO:0005576">
    <property type="term" value="C:extracellular region"/>
    <property type="evidence" value="ECO:0007669"/>
    <property type="project" value="UniProtKB-SubCell"/>
</dbReference>
<dbReference type="GO" id="GO:0046872">
    <property type="term" value="F:metal ion binding"/>
    <property type="evidence" value="ECO:0007669"/>
    <property type="project" value="UniProtKB-KW"/>
</dbReference>
<dbReference type="GO" id="GO:0004222">
    <property type="term" value="F:metalloendopeptidase activity"/>
    <property type="evidence" value="ECO:0007669"/>
    <property type="project" value="InterPro"/>
</dbReference>
<dbReference type="GO" id="GO:0006508">
    <property type="term" value="P:proteolysis"/>
    <property type="evidence" value="ECO:0007669"/>
    <property type="project" value="UniProtKB-KW"/>
</dbReference>
<dbReference type="CDD" id="cd09597">
    <property type="entry name" value="M4_TLP"/>
    <property type="match status" value="1"/>
</dbReference>
<dbReference type="FunFam" id="2.60.120.380:FF:000013">
    <property type="entry name" value="Alkaline serine protease"/>
    <property type="match status" value="1"/>
</dbReference>
<dbReference type="Gene3D" id="2.60.120.380">
    <property type="match status" value="1"/>
</dbReference>
<dbReference type="Gene3D" id="3.10.170.10">
    <property type="match status" value="1"/>
</dbReference>
<dbReference type="Gene3D" id="3.10.450.40">
    <property type="match status" value="1"/>
</dbReference>
<dbReference type="Gene3D" id="3.10.450.490">
    <property type="match status" value="1"/>
</dbReference>
<dbReference type="Gene3D" id="1.10.390.10">
    <property type="entry name" value="Neutral Protease Domain 2"/>
    <property type="match status" value="1"/>
</dbReference>
<dbReference type="InterPro" id="IPR011096">
    <property type="entry name" value="FTP_domain"/>
</dbReference>
<dbReference type="InterPro" id="IPR007280">
    <property type="entry name" value="Peptidase_C_arc/bac"/>
</dbReference>
<dbReference type="InterPro" id="IPR023612">
    <property type="entry name" value="Peptidase_M4"/>
</dbReference>
<dbReference type="InterPro" id="IPR027268">
    <property type="entry name" value="Peptidase_M4/M1_CTD_sf"/>
</dbReference>
<dbReference type="InterPro" id="IPR001570">
    <property type="entry name" value="Peptidase_M4_C_domain"/>
</dbReference>
<dbReference type="InterPro" id="IPR013856">
    <property type="entry name" value="Peptidase_M4_domain"/>
</dbReference>
<dbReference type="InterPro" id="IPR050728">
    <property type="entry name" value="Zinc_Metalloprotease_M4"/>
</dbReference>
<dbReference type="PANTHER" id="PTHR33794">
    <property type="entry name" value="BACILLOLYSIN"/>
    <property type="match status" value="1"/>
</dbReference>
<dbReference type="PANTHER" id="PTHR33794:SF1">
    <property type="entry name" value="BACILLOLYSIN"/>
    <property type="match status" value="1"/>
</dbReference>
<dbReference type="Pfam" id="PF07504">
    <property type="entry name" value="FTP"/>
    <property type="match status" value="1"/>
</dbReference>
<dbReference type="Pfam" id="PF01447">
    <property type="entry name" value="Peptidase_M4"/>
    <property type="match status" value="1"/>
</dbReference>
<dbReference type="Pfam" id="PF02868">
    <property type="entry name" value="Peptidase_M4_C"/>
    <property type="match status" value="1"/>
</dbReference>
<dbReference type="Pfam" id="PF04151">
    <property type="entry name" value="PPC"/>
    <property type="match status" value="1"/>
</dbReference>
<dbReference type="PRINTS" id="PR00730">
    <property type="entry name" value="THERMOLYSIN"/>
</dbReference>
<dbReference type="SUPFAM" id="SSF89260">
    <property type="entry name" value="Collagen-binding domain"/>
    <property type="match status" value="1"/>
</dbReference>
<dbReference type="SUPFAM" id="SSF55486">
    <property type="entry name" value="Metalloproteases ('zincins'), catalytic domain"/>
    <property type="match status" value="1"/>
</dbReference>
<dbReference type="PROSITE" id="PS00142">
    <property type="entry name" value="ZINC_PROTEASE"/>
    <property type="match status" value="1"/>
</dbReference>